<protein>
    <recommendedName>
        <fullName evidence="1">Ketol-acid reductoisomerase (NADP(+))</fullName>
        <shortName evidence="1">KARI</shortName>
        <ecNumber evidence="1">1.1.1.86</ecNumber>
    </recommendedName>
    <alternativeName>
        <fullName evidence="1">Acetohydroxy-acid isomeroreductase</fullName>
        <shortName evidence="1">AHIR</shortName>
    </alternativeName>
    <alternativeName>
        <fullName evidence="1">Alpha-keto-beta-hydroxylacyl reductoisomerase</fullName>
    </alternativeName>
    <alternativeName>
        <fullName evidence="1">Ketol-acid reductoisomerase type 1</fullName>
    </alternativeName>
    <alternativeName>
        <fullName evidence="1">Ketol-acid reductoisomerase type I</fullName>
    </alternativeName>
</protein>
<dbReference type="EC" id="1.1.1.86" evidence="1"/>
<dbReference type="EMBL" id="AL596171">
    <property type="protein sequence ID" value="CAC97323.1"/>
    <property type="molecule type" value="Genomic_DNA"/>
</dbReference>
<dbReference type="PIR" id="AC1694">
    <property type="entry name" value="AC1694"/>
</dbReference>
<dbReference type="RefSeq" id="WP_003727977.1">
    <property type="nucleotide sequence ID" value="NC_003212.1"/>
</dbReference>
<dbReference type="SMR" id="Q92A29"/>
<dbReference type="STRING" id="272626.gene:17566451"/>
<dbReference type="GeneID" id="93235432"/>
<dbReference type="KEGG" id="lin:ilvC"/>
<dbReference type="eggNOG" id="COG0059">
    <property type="taxonomic scope" value="Bacteria"/>
</dbReference>
<dbReference type="HOGENOM" id="CLU_033821_0_1_9"/>
<dbReference type="OrthoDB" id="9804088at2"/>
<dbReference type="UniPathway" id="UPA00047">
    <property type="reaction ID" value="UER00056"/>
</dbReference>
<dbReference type="UniPathway" id="UPA00049">
    <property type="reaction ID" value="UER00060"/>
</dbReference>
<dbReference type="Proteomes" id="UP000002513">
    <property type="component" value="Chromosome"/>
</dbReference>
<dbReference type="GO" id="GO:0005829">
    <property type="term" value="C:cytosol"/>
    <property type="evidence" value="ECO:0007669"/>
    <property type="project" value="TreeGrafter"/>
</dbReference>
<dbReference type="GO" id="GO:0004455">
    <property type="term" value="F:ketol-acid reductoisomerase activity"/>
    <property type="evidence" value="ECO:0007669"/>
    <property type="project" value="UniProtKB-UniRule"/>
</dbReference>
<dbReference type="GO" id="GO:0000287">
    <property type="term" value="F:magnesium ion binding"/>
    <property type="evidence" value="ECO:0007669"/>
    <property type="project" value="UniProtKB-UniRule"/>
</dbReference>
<dbReference type="GO" id="GO:0050661">
    <property type="term" value="F:NADP binding"/>
    <property type="evidence" value="ECO:0007669"/>
    <property type="project" value="InterPro"/>
</dbReference>
<dbReference type="GO" id="GO:0009097">
    <property type="term" value="P:isoleucine biosynthetic process"/>
    <property type="evidence" value="ECO:0007669"/>
    <property type="project" value="UniProtKB-UniRule"/>
</dbReference>
<dbReference type="GO" id="GO:0009099">
    <property type="term" value="P:L-valine biosynthetic process"/>
    <property type="evidence" value="ECO:0007669"/>
    <property type="project" value="UniProtKB-UniRule"/>
</dbReference>
<dbReference type="FunFam" id="3.40.50.720:FF:000023">
    <property type="entry name" value="Ketol-acid reductoisomerase (NADP(+))"/>
    <property type="match status" value="1"/>
</dbReference>
<dbReference type="Gene3D" id="6.10.240.10">
    <property type="match status" value="1"/>
</dbReference>
<dbReference type="Gene3D" id="3.40.50.720">
    <property type="entry name" value="NAD(P)-binding Rossmann-like Domain"/>
    <property type="match status" value="1"/>
</dbReference>
<dbReference type="HAMAP" id="MF_00435">
    <property type="entry name" value="IlvC"/>
    <property type="match status" value="1"/>
</dbReference>
<dbReference type="InterPro" id="IPR008927">
    <property type="entry name" value="6-PGluconate_DH-like_C_sf"/>
</dbReference>
<dbReference type="InterPro" id="IPR013023">
    <property type="entry name" value="KARI"/>
</dbReference>
<dbReference type="InterPro" id="IPR000506">
    <property type="entry name" value="KARI_C"/>
</dbReference>
<dbReference type="InterPro" id="IPR013116">
    <property type="entry name" value="KARI_N"/>
</dbReference>
<dbReference type="InterPro" id="IPR014359">
    <property type="entry name" value="KARI_prok"/>
</dbReference>
<dbReference type="InterPro" id="IPR036291">
    <property type="entry name" value="NAD(P)-bd_dom_sf"/>
</dbReference>
<dbReference type="NCBIfam" id="TIGR00465">
    <property type="entry name" value="ilvC"/>
    <property type="match status" value="1"/>
</dbReference>
<dbReference type="NCBIfam" id="NF004017">
    <property type="entry name" value="PRK05479.1"/>
    <property type="match status" value="1"/>
</dbReference>
<dbReference type="NCBIfam" id="NF009940">
    <property type="entry name" value="PRK13403.1"/>
    <property type="match status" value="1"/>
</dbReference>
<dbReference type="PANTHER" id="PTHR21371">
    <property type="entry name" value="KETOL-ACID REDUCTOISOMERASE, MITOCHONDRIAL"/>
    <property type="match status" value="1"/>
</dbReference>
<dbReference type="PANTHER" id="PTHR21371:SF1">
    <property type="entry name" value="KETOL-ACID REDUCTOISOMERASE, MITOCHONDRIAL"/>
    <property type="match status" value="1"/>
</dbReference>
<dbReference type="Pfam" id="PF01450">
    <property type="entry name" value="KARI_C"/>
    <property type="match status" value="1"/>
</dbReference>
<dbReference type="Pfam" id="PF07991">
    <property type="entry name" value="KARI_N"/>
    <property type="match status" value="1"/>
</dbReference>
<dbReference type="PIRSF" id="PIRSF000116">
    <property type="entry name" value="IlvC_gammaproteo"/>
    <property type="match status" value="1"/>
</dbReference>
<dbReference type="SUPFAM" id="SSF48179">
    <property type="entry name" value="6-phosphogluconate dehydrogenase C-terminal domain-like"/>
    <property type="match status" value="1"/>
</dbReference>
<dbReference type="SUPFAM" id="SSF51735">
    <property type="entry name" value="NAD(P)-binding Rossmann-fold domains"/>
    <property type="match status" value="1"/>
</dbReference>
<dbReference type="PROSITE" id="PS51851">
    <property type="entry name" value="KARI_C"/>
    <property type="match status" value="1"/>
</dbReference>
<dbReference type="PROSITE" id="PS51850">
    <property type="entry name" value="KARI_N"/>
    <property type="match status" value="1"/>
</dbReference>
<reference key="1">
    <citation type="journal article" date="2001" name="Science">
        <title>Comparative genomics of Listeria species.</title>
        <authorList>
            <person name="Glaser P."/>
            <person name="Frangeul L."/>
            <person name="Buchrieser C."/>
            <person name="Rusniok C."/>
            <person name="Amend A."/>
            <person name="Baquero F."/>
            <person name="Berche P."/>
            <person name="Bloecker H."/>
            <person name="Brandt P."/>
            <person name="Chakraborty T."/>
            <person name="Charbit A."/>
            <person name="Chetouani F."/>
            <person name="Couve E."/>
            <person name="de Daruvar A."/>
            <person name="Dehoux P."/>
            <person name="Domann E."/>
            <person name="Dominguez-Bernal G."/>
            <person name="Duchaud E."/>
            <person name="Durant L."/>
            <person name="Dussurget O."/>
            <person name="Entian K.-D."/>
            <person name="Fsihi H."/>
            <person name="Garcia-del Portillo F."/>
            <person name="Garrido P."/>
            <person name="Gautier L."/>
            <person name="Goebel W."/>
            <person name="Gomez-Lopez N."/>
            <person name="Hain T."/>
            <person name="Hauf J."/>
            <person name="Jackson D."/>
            <person name="Jones L.-M."/>
            <person name="Kaerst U."/>
            <person name="Kreft J."/>
            <person name="Kuhn M."/>
            <person name="Kunst F."/>
            <person name="Kurapkat G."/>
            <person name="Madueno E."/>
            <person name="Maitournam A."/>
            <person name="Mata Vicente J."/>
            <person name="Ng E."/>
            <person name="Nedjari H."/>
            <person name="Nordsiek G."/>
            <person name="Novella S."/>
            <person name="de Pablos B."/>
            <person name="Perez-Diaz J.-C."/>
            <person name="Purcell R."/>
            <person name="Remmel B."/>
            <person name="Rose M."/>
            <person name="Schlueter T."/>
            <person name="Simoes N."/>
            <person name="Tierrez A."/>
            <person name="Vazquez-Boland J.-A."/>
            <person name="Voss H."/>
            <person name="Wehland J."/>
            <person name="Cossart P."/>
        </authorList>
    </citation>
    <scope>NUCLEOTIDE SEQUENCE [LARGE SCALE GENOMIC DNA]</scope>
    <source>
        <strain>ATCC BAA-680 / CLIP 11262</strain>
    </source>
</reference>
<proteinExistence type="inferred from homology"/>
<name>ILVC_LISIN</name>
<evidence type="ECO:0000255" key="1">
    <source>
        <dbReference type="HAMAP-Rule" id="MF_00435"/>
    </source>
</evidence>
<evidence type="ECO:0000255" key="2">
    <source>
        <dbReference type="PROSITE-ProRule" id="PRU01197"/>
    </source>
</evidence>
<evidence type="ECO:0000255" key="3">
    <source>
        <dbReference type="PROSITE-ProRule" id="PRU01198"/>
    </source>
</evidence>
<gene>
    <name evidence="1" type="primary">ilvC</name>
    <name type="ordered locus">lin2093</name>
</gene>
<keyword id="KW-0028">Amino-acid biosynthesis</keyword>
<keyword id="KW-0100">Branched-chain amino acid biosynthesis</keyword>
<keyword id="KW-0460">Magnesium</keyword>
<keyword id="KW-0479">Metal-binding</keyword>
<keyword id="KW-0521">NADP</keyword>
<keyword id="KW-0560">Oxidoreductase</keyword>
<accession>Q92A29</accession>
<feature type="chain" id="PRO_0000151323" description="Ketol-acid reductoisomerase (NADP(+))">
    <location>
        <begin position="1"/>
        <end position="331"/>
    </location>
</feature>
<feature type="domain" description="KARI N-terminal Rossmann" evidence="2">
    <location>
        <begin position="2"/>
        <end position="181"/>
    </location>
</feature>
<feature type="domain" description="KARI C-terminal knotted" evidence="3">
    <location>
        <begin position="182"/>
        <end position="327"/>
    </location>
</feature>
<feature type="active site" evidence="1">
    <location>
        <position position="107"/>
    </location>
</feature>
<feature type="binding site" evidence="1">
    <location>
        <begin position="25"/>
        <end position="28"/>
    </location>
    <ligand>
        <name>NADP(+)</name>
        <dbReference type="ChEBI" id="CHEBI:58349"/>
    </ligand>
</feature>
<feature type="binding site" evidence="1">
    <location>
        <position position="48"/>
    </location>
    <ligand>
        <name>NADP(+)</name>
        <dbReference type="ChEBI" id="CHEBI:58349"/>
    </ligand>
</feature>
<feature type="binding site" evidence="1">
    <location>
        <position position="52"/>
    </location>
    <ligand>
        <name>NADP(+)</name>
        <dbReference type="ChEBI" id="CHEBI:58349"/>
    </ligand>
</feature>
<feature type="binding site" evidence="1">
    <location>
        <begin position="82"/>
        <end position="85"/>
    </location>
    <ligand>
        <name>NADP(+)</name>
        <dbReference type="ChEBI" id="CHEBI:58349"/>
    </ligand>
</feature>
<feature type="binding site" evidence="1">
    <location>
        <position position="133"/>
    </location>
    <ligand>
        <name>NADP(+)</name>
        <dbReference type="ChEBI" id="CHEBI:58349"/>
    </ligand>
</feature>
<feature type="binding site" evidence="1">
    <location>
        <position position="190"/>
    </location>
    <ligand>
        <name>Mg(2+)</name>
        <dbReference type="ChEBI" id="CHEBI:18420"/>
        <label>1</label>
    </ligand>
</feature>
<feature type="binding site" evidence="1">
    <location>
        <position position="190"/>
    </location>
    <ligand>
        <name>Mg(2+)</name>
        <dbReference type="ChEBI" id="CHEBI:18420"/>
        <label>2</label>
    </ligand>
</feature>
<feature type="binding site" evidence="1">
    <location>
        <position position="194"/>
    </location>
    <ligand>
        <name>Mg(2+)</name>
        <dbReference type="ChEBI" id="CHEBI:18420"/>
        <label>1</label>
    </ligand>
</feature>
<feature type="binding site" evidence="1">
    <location>
        <position position="226"/>
    </location>
    <ligand>
        <name>Mg(2+)</name>
        <dbReference type="ChEBI" id="CHEBI:18420"/>
        <label>2</label>
    </ligand>
</feature>
<feature type="binding site" evidence="1">
    <location>
        <position position="230"/>
    </location>
    <ligand>
        <name>Mg(2+)</name>
        <dbReference type="ChEBI" id="CHEBI:18420"/>
        <label>2</label>
    </ligand>
</feature>
<feature type="binding site" evidence="1">
    <location>
        <position position="251"/>
    </location>
    <ligand>
        <name>substrate</name>
    </ligand>
</feature>
<organism>
    <name type="scientific">Listeria innocua serovar 6a (strain ATCC BAA-680 / CLIP 11262)</name>
    <dbReference type="NCBI Taxonomy" id="272626"/>
    <lineage>
        <taxon>Bacteria</taxon>
        <taxon>Bacillati</taxon>
        <taxon>Bacillota</taxon>
        <taxon>Bacilli</taxon>
        <taxon>Bacillales</taxon>
        <taxon>Listeriaceae</taxon>
        <taxon>Listeria</taxon>
    </lineage>
</organism>
<sequence>MTKVYYEDAVKNNALEGKTVAVIGYGSQGHAHSQNLRDNGNNVIIGIREGKSAESARNDGFDVYSVSEAAEKADVIMILLPDETQGETYENEIKPNLKAGNALVFAHGFNIHFDVINPPSDVDVFLVAPKGPGHLVRRTFVEGGAVPSLFAIYQDATGNARDTALSYAKGIGATRAGVIETTFKEETETDLFGEQAVLCGGATHLIQAGFETLVEAGYQPELAYFEVLHEMKLIVDLMYEGGMEKMRHSISNTAEYGDYVSGPRVVTADTKKAMKEVLTDIQNGNFAKSFIDDNKNGFKEFHRMRKEQQGHQIEKVGAELREMMPFVKPQH</sequence>
<comment type="function">
    <text evidence="1">Involved in the biosynthesis of branched-chain amino acids (BCAA). Catalyzes an alkyl-migration followed by a ketol-acid reduction of (S)-2-acetolactate (S2AL) to yield (R)-2,3-dihydroxy-isovalerate. In the isomerase reaction, S2AL is rearranged via a Mg-dependent methyl migration to produce 3-hydroxy-3-methyl-2-ketobutyrate (HMKB). In the reductase reaction, this 2-ketoacid undergoes a metal-dependent reduction by NADPH to yield (R)-2,3-dihydroxy-isovalerate.</text>
</comment>
<comment type="catalytic activity">
    <reaction evidence="1">
        <text>(2R)-2,3-dihydroxy-3-methylbutanoate + NADP(+) = (2S)-2-acetolactate + NADPH + H(+)</text>
        <dbReference type="Rhea" id="RHEA:22068"/>
        <dbReference type="ChEBI" id="CHEBI:15378"/>
        <dbReference type="ChEBI" id="CHEBI:49072"/>
        <dbReference type="ChEBI" id="CHEBI:57783"/>
        <dbReference type="ChEBI" id="CHEBI:58349"/>
        <dbReference type="ChEBI" id="CHEBI:58476"/>
        <dbReference type="EC" id="1.1.1.86"/>
    </reaction>
</comment>
<comment type="catalytic activity">
    <reaction evidence="1">
        <text>(2R,3R)-2,3-dihydroxy-3-methylpentanoate + NADP(+) = (S)-2-ethyl-2-hydroxy-3-oxobutanoate + NADPH + H(+)</text>
        <dbReference type="Rhea" id="RHEA:13493"/>
        <dbReference type="ChEBI" id="CHEBI:15378"/>
        <dbReference type="ChEBI" id="CHEBI:49256"/>
        <dbReference type="ChEBI" id="CHEBI:49258"/>
        <dbReference type="ChEBI" id="CHEBI:57783"/>
        <dbReference type="ChEBI" id="CHEBI:58349"/>
        <dbReference type="EC" id="1.1.1.86"/>
    </reaction>
</comment>
<comment type="cofactor">
    <cofactor evidence="1">
        <name>Mg(2+)</name>
        <dbReference type="ChEBI" id="CHEBI:18420"/>
    </cofactor>
    <text evidence="1">Binds 2 magnesium ions per subunit.</text>
</comment>
<comment type="pathway">
    <text evidence="1">Amino-acid biosynthesis; L-isoleucine biosynthesis; L-isoleucine from 2-oxobutanoate: step 2/4.</text>
</comment>
<comment type="pathway">
    <text evidence="1">Amino-acid biosynthesis; L-valine biosynthesis; L-valine from pyruvate: step 2/4.</text>
</comment>
<comment type="similarity">
    <text evidence="1">Belongs to the ketol-acid reductoisomerase family.</text>
</comment>